<accession>C5B9W5</accession>
<gene>
    <name evidence="1" type="primary">dadA</name>
    <name type="ordered locus">NT01EI_1632</name>
</gene>
<keyword id="KW-0274">FAD</keyword>
<keyword id="KW-0285">Flavoprotein</keyword>
<keyword id="KW-0560">Oxidoreductase</keyword>
<feature type="chain" id="PRO_1000213847" description="D-amino acid dehydrogenase">
    <location>
        <begin position="1"/>
        <end position="417"/>
    </location>
</feature>
<feature type="binding site" evidence="1">
    <location>
        <begin position="3"/>
        <end position="17"/>
    </location>
    <ligand>
        <name>FAD</name>
        <dbReference type="ChEBI" id="CHEBI:57692"/>
    </ligand>
</feature>
<comment type="function">
    <text evidence="1">Oxidative deamination of D-amino acids.</text>
</comment>
<comment type="catalytic activity">
    <reaction evidence="1">
        <text>a D-alpha-amino acid + A + H2O = a 2-oxocarboxylate + AH2 + NH4(+)</text>
        <dbReference type="Rhea" id="RHEA:18125"/>
        <dbReference type="ChEBI" id="CHEBI:13193"/>
        <dbReference type="ChEBI" id="CHEBI:15377"/>
        <dbReference type="ChEBI" id="CHEBI:17499"/>
        <dbReference type="ChEBI" id="CHEBI:28938"/>
        <dbReference type="ChEBI" id="CHEBI:35179"/>
        <dbReference type="ChEBI" id="CHEBI:59871"/>
    </reaction>
</comment>
<comment type="cofactor">
    <cofactor evidence="1">
        <name>FAD</name>
        <dbReference type="ChEBI" id="CHEBI:57692"/>
    </cofactor>
</comment>
<comment type="pathway">
    <text>Amino-acid degradation; D-alanine degradation; NH(3) and pyruvate from D-alanine: step 1/1.</text>
</comment>
<comment type="similarity">
    <text evidence="1">Belongs to the DadA oxidoreductase family.</text>
</comment>
<reference key="1">
    <citation type="submission" date="2009-03" db="EMBL/GenBank/DDBJ databases">
        <title>Complete genome sequence of Edwardsiella ictaluri 93-146.</title>
        <authorList>
            <person name="Williams M.L."/>
            <person name="Gillaspy A.F."/>
            <person name="Dyer D.W."/>
            <person name="Thune R.L."/>
            <person name="Waldbieser G.C."/>
            <person name="Schuster S.C."/>
            <person name="Gipson J."/>
            <person name="Zaitshik J."/>
            <person name="Landry C."/>
            <person name="Lawrence M.L."/>
        </authorList>
    </citation>
    <scope>NUCLEOTIDE SEQUENCE [LARGE SCALE GENOMIC DNA]</scope>
    <source>
        <strain>93-146</strain>
    </source>
</reference>
<proteinExistence type="inferred from homology"/>
<dbReference type="EC" id="1.4.99.-" evidence="1"/>
<dbReference type="EMBL" id="CP001600">
    <property type="protein sequence ID" value="ACR68816.1"/>
    <property type="molecule type" value="Genomic_DNA"/>
</dbReference>
<dbReference type="RefSeq" id="WP_015870972.1">
    <property type="nucleotide sequence ID" value="NZ_CP169062.1"/>
</dbReference>
<dbReference type="SMR" id="C5B9W5"/>
<dbReference type="STRING" id="67780.B6E78_01350"/>
<dbReference type="KEGG" id="eic:NT01EI_1632"/>
<dbReference type="PATRIC" id="fig|634503.3.peg.1463"/>
<dbReference type="HOGENOM" id="CLU_007884_9_2_6"/>
<dbReference type="OrthoDB" id="9805337at2"/>
<dbReference type="UniPathway" id="UPA00043">
    <property type="reaction ID" value="UER00498"/>
</dbReference>
<dbReference type="Proteomes" id="UP000001485">
    <property type="component" value="Chromosome"/>
</dbReference>
<dbReference type="GO" id="GO:0005737">
    <property type="term" value="C:cytoplasm"/>
    <property type="evidence" value="ECO:0007669"/>
    <property type="project" value="TreeGrafter"/>
</dbReference>
<dbReference type="GO" id="GO:0005886">
    <property type="term" value="C:plasma membrane"/>
    <property type="evidence" value="ECO:0007669"/>
    <property type="project" value="TreeGrafter"/>
</dbReference>
<dbReference type="GO" id="GO:0008718">
    <property type="term" value="F:D-amino-acid dehydrogenase activity"/>
    <property type="evidence" value="ECO:0007669"/>
    <property type="project" value="UniProtKB-UniRule"/>
</dbReference>
<dbReference type="GO" id="GO:0055130">
    <property type="term" value="P:D-alanine catabolic process"/>
    <property type="evidence" value="ECO:0007669"/>
    <property type="project" value="UniProtKB-UniPathway"/>
</dbReference>
<dbReference type="FunFam" id="3.50.50.60:FF:000020">
    <property type="entry name" value="D-amino acid dehydrogenase"/>
    <property type="match status" value="1"/>
</dbReference>
<dbReference type="Gene3D" id="3.30.9.10">
    <property type="entry name" value="D-Amino Acid Oxidase, subunit A, domain 2"/>
    <property type="match status" value="1"/>
</dbReference>
<dbReference type="Gene3D" id="3.50.50.60">
    <property type="entry name" value="FAD/NAD(P)-binding domain"/>
    <property type="match status" value="2"/>
</dbReference>
<dbReference type="HAMAP" id="MF_01202">
    <property type="entry name" value="DadA"/>
    <property type="match status" value="1"/>
</dbReference>
<dbReference type="InterPro" id="IPR023080">
    <property type="entry name" value="DadA"/>
</dbReference>
<dbReference type="InterPro" id="IPR006076">
    <property type="entry name" value="FAD-dep_OxRdtase"/>
</dbReference>
<dbReference type="InterPro" id="IPR036188">
    <property type="entry name" value="FAD/NAD-bd_sf"/>
</dbReference>
<dbReference type="NCBIfam" id="NF001933">
    <property type="entry name" value="PRK00711.1"/>
    <property type="match status" value="1"/>
</dbReference>
<dbReference type="PANTHER" id="PTHR13847:SF280">
    <property type="entry name" value="D-AMINO ACID DEHYDROGENASE"/>
    <property type="match status" value="1"/>
</dbReference>
<dbReference type="PANTHER" id="PTHR13847">
    <property type="entry name" value="SARCOSINE DEHYDROGENASE-RELATED"/>
    <property type="match status" value="1"/>
</dbReference>
<dbReference type="Pfam" id="PF01266">
    <property type="entry name" value="DAO"/>
    <property type="match status" value="1"/>
</dbReference>
<dbReference type="SUPFAM" id="SSF54373">
    <property type="entry name" value="FAD-linked reductases, C-terminal domain"/>
    <property type="match status" value="1"/>
</dbReference>
<dbReference type="SUPFAM" id="SSF51905">
    <property type="entry name" value="FAD/NAD(P)-binding domain"/>
    <property type="match status" value="1"/>
</dbReference>
<name>DADA_EDWI9</name>
<organism>
    <name type="scientific">Edwardsiella ictaluri (strain 93-146)</name>
    <dbReference type="NCBI Taxonomy" id="634503"/>
    <lineage>
        <taxon>Bacteria</taxon>
        <taxon>Pseudomonadati</taxon>
        <taxon>Pseudomonadota</taxon>
        <taxon>Gammaproteobacteria</taxon>
        <taxon>Enterobacterales</taxon>
        <taxon>Hafniaceae</taxon>
        <taxon>Edwardsiella</taxon>
    </lineage>
</organism>
<protein>
    <recommendedName>
        <fullName evidence="1">D-amino acid dehydrogenase</fullName>
        <ecNumber evidence="1">1.4.99.-</ecNumber>
    </recommendedName>
</protein>
<evidence type="ECO:0000255" key="1">
    <source>
        <dbReference type="HAMAP-Rule" id="MF_01202"/>
    </source>
</evidence>
<sequence length="417" mass="45367">MRVVILGSGVIGVTSAWYLAQAGHQVTVVDRQEGPGLETSAANAGQISPGYAAPWAAPGIPLKALKWLFQRHAPLAMSLDGSLFQLRWLWQMLRNCDSTHYAQNKARMVRLAEYSRDCLAQLRRTTTIDYEGRQLGTLQLFRTPQQYENAARDIAVLREAGVPYRLLPTAQLSTVEPALAVAGVRLSGGLHLPHDETGDCQLFTRHLAQQAAQSGVHFIFSTQVLRLLRSGARIQGVQCGHDTLVADAYVVALGAYSTGLLQDIVAIPVYPLKGYSLTLPIDDPDAAPRSTVLDESYKVAITRFDRRIRVGGMAEVVGFDMSLPLARRRTLERVVRDLYPRGGLLPQASFWSGLRPATPDGTPLVGATPLENLYLNTGHGTLGWTMACGSGQLLADIISGVTPTIRVDDLSVSRYTA</sequence>